<keyword id="KW-0028">Amino-acid biosynthesis</keyword>
<keyword id="KW-0368">Histidine biosynthesis</keyword>
<keyword id="KW-0378">Hydrolase</keyword>
<keyword id="KW-0486">Methionine biosynthesis</keyword>
<keyword id="KW-0511">Multifunctional enzyme</keyword>
<keyword id="KW-0521">NADP</keyword>
<keyword id="KW-0554">One-carbon metabolism</keyword>
<keyword id="KW-0560">Oxidoreductase</keyword>
<keyword id="KW-0658">Purine biosynthesis</keyword>
<keyword id="KW-1185">Reference proteome</keyword>
<gene>
    <name evidence="1" type="primary">folD</name>
    <name type="ordered locus">Amet_2020</name>
</gene>
<sequence>MGEIIKGKPVADKISEDLIQEIEGLKGKGIQPKLAIVRVGANSSDLAYEKGALGRSKKVGVETEVHELPEDITQDDFIKELKKLNEDKAVNGILIFRPLPEQLDESVIKYVIAPEKDIDCLSPINVGKMTEGDKTGFPPCTPTAVVEILKFYGVELQGKDCAIIGASMVVGKPAALLLLNENATISVCHIFTKDSAKIASQADVVVVGVGVPRLVKENWIANGAVVIDVGINVDKEGNMCGDVDFDGVKDKVSMITPVPGGVGSVTTSILAKHVVKACKQQNNL</sequence>
<proteinExistence type="inferred from homology"/>
<accession>A6TPR4</accession>
<dbReference type="EC" id="1.5.1.5" evidence="1"/>
<dbReference type="EC" id="3.5.4.9" evidence="1"/>
<dbReference type="EMBL" id="CP000724">
    <property type="protein sequence ID" value="ABR48182.1"/>
    <property type="molecule type" value="Genomic_DNA"/>
</dbReference>
<dbReference type="RefSeq" id="WP_012063162.1">
    <property type="nucleotide sequence ID" value="NC_009633.1"/>
</dbReference>
<dbReference type="SMR" id="A6TPR4"/>
<dbReference type="STRING" id="293826.Amet_2020"/>
<dbReference type="KEGG" id="amt:Amet_2020"/>
<dbReference type="eggNOG" id="COG0190">
    <property type="taxonomic scope" value="Bacteria"/>
</dbReference>
<dbReference type="HOGENOM" id="CLU_034045_2_1_9"/>
<dbReference type="OrthoDB" id="9803580at2"/>
<dbReference type="UniPathway" id="UPA00193"/>
<dbReference type="Proteomes" id="UP000001572">
    <property type="component" value="Chromosome"/>
</dbReference>
<dbReference type="GO" id="GO:0005829">
    <property type="term" value="C:cytosol"/>
    <property type="evidence" value="ECO:0007669"/>
    <property type="project" value="TreeGrafter"/>
</dbReference>
<dbReference type="GO" id="GO:0004477">
    <property type="term" value="F:methenyltetrahydrofolate cyclohydrolase activity"/>
    <property type="evidence" value="ECO:0007669"/>
    <property type="project" value="UniProtKB-UniRule"/>
</dbReference>
<dbReference type="GO" id="GO:0004488">
    <property type="term" value="F:methylenetetrahydrofolate dehydrogenase (NADP+) activity"/>
    <property type="evidence" value="ECO:0007669"/>
    <property type="project" value="UniProtKB-UniRule"/>
</dbReference>
<dbReference type="GO" id="GO:0000105">
    <property type="term" value="P:L-histidine biosynthetic process"/>
    <property type="evidence" value="ECO:0007669"/>
    <property type="project" value="UniProtKB-KW"/>
</dbReference>
<dbReference type="GO" id="GO:0009086">
    <property type="term" value="P:methionine biosynthetic process"/>
    <property type="evidence" value="ECO:0007669"/>
    <property type="project" value="UniProtKB-KW"/>
</dbReference>
<dbReference type="GO" id="GO:0006164">
    <property type="term" value="P:purine nucleotide biosynthetic process"/>
    <property type="evidence" value="ECO:0007669"/>
    <property type="project" value="UniProtKB-KW"/>
</dbReference>
<dbReference type="GO" id="GO:0035999">
    <property type="term" value="P:tetrahydrofolate interconversion"/>
    <property type="evidence" value="ECO:0007669"/>
    <property type="project" value="UniProtKB-UniRule"/>
</dbReference>
<dbReference type="CDD" id="cd01080">
    <property type="entry name" value="NAD_bind_m-THF_DH_Cyclohyd"/>
    <property type="match status" value="1"/>
</dbReference>
<dbReference type="FunFam" id="3.40.50.720:FF:000094">
    <property type="entry name" value="Bifunctional protein FolD"/>
    <property type="match status" value="1"/>
</dbReference>
<dbReference type="FunFam" id="3.40.50.10860:FF:000005">
    <property type="entry name" value="C-1-tetrahydrofolate synthase, cytoplasmic, putative"/>
    <property type="match status" value="1"/>
</dbReference>
<dbReference type="Gene3D" id="3.40.50.10860">
    <property type="entry name" value="Leucine Dehydrogenase, chain A, domain 1"/>
    <property type="match status" value="1"/>
</dbReference>
<dbReference type="Gene3D" id="3.40.50.720">
    <property type="entry name" value="NAD(P)-binding Rossmann-like Domain"/>
    <property type="match status" value="1"/>
</dbReference>
<dbReference type="HAMAP" id="MF_01576">
    <property type="entry name" value="THF_DHG_CYH"/>
    <property type="match status" value="1"/>
</dbReference>
<dbReference type="InterPro" id="IPR046346">
    <property type="entry name" value="Aminoacid_DH-like_N_sf"/>
</dbReference>
<dbReference type="InterPro" id="IPR036291">
    <property type="entry name" value="NAD(P)-bd_dom_sf"/>
</dbReference>
<dbReference type="InterPro" id="IPR000672">
    <property type="entry name" value="THF_DH/CycHdrlase"/>
</dbReference>
<dbReference type="InterPro" id="IPR020630">
    <property type="entry name" value="THF_DH/CycHdrlase_cat_dom"/>
</dbReference>
<dbReference type="InterPro" id="IPR020631">
    <property type="entry name" value="THF_DH/CycHdrlase_NAD-bd_dom"/>
</dbReference>
<dbReference type="PANTHER" id="PTHR48099:SF5">
    <property type="entry name" value="C-1-TETRAHYDROFOLATE SYNTHASE, CYTOPLASMIC"/>
    <property type="match status" value="1"/>
</dbReference>
<dbReference type="PANTHER" id="PTHR48099">
    <property type="entry name" value="C-1-TETRAHYDROFOLATE SYNTHASE, CYTOPLASMIC-RELATED"/>
    <property type="match status" value="1"/>
</dbReference>
<dbReference type="Pfam" id="PF00763">
    <property type="entry name" value="THF_DHG_CYH"/>
    <property type="match status" value="1"/>
</dbReference>
<dbReference type="Pfam" id="PF02882">
    <property type="entry name" value="THF_DHG_CYH_C"/>
    <property type="match status" value="1"/>
</dbReference>
<dbReference type="PRINTS" id="PR00085">
    <property type="entry name" value="THFDHDRGNASE"/>
</dbReference>
<dbReference type="SUPFAM" id="SSF53223">
    <property type="entry name" value="Aminoacid dehydrogenase-like, N-terminal domain"/>
    <property type="match status" value="1"/>
</dbReference>
<dbReference type="SUPFAM" id="SSF51735">
    <property type="entry name" value="NAD(P)-binding Rossmann-fold domains"/>
    <property type="match status" value="1"/>
</dbReference>
<reference key="1">
    <citation type="journal article" date="2016" name="Genome Announc.">
        <title>Complete genome sequence of Alkaliphilus metalliredigens strain QYMF, an alkaliphilic and metal-reducing bacterium isolated from borax-contaminated leachate ponds.</title>
        <authorList>
            <person name="Hwang C."/>
            <person name="Copeland A."/>
            <person name="Lucas S."/>
            <person name="Lapidus A."/>
            <person name="Barry K."/>
            <person name="Detter J.C."/>
            <person name="Glavina Del Rio T."/>
            <person name="Hammon N."/>
            <person name="Israni S."/>
            <person name="Dalin E."/>
            <person name="Tice H."/>
            <person name="Pitluck S."/>
            <person name="Chertkov O."/>
            <person name="Brettin T."/>
            <person name="Bruce D."/>
            <person name="Han C."/>
            <person name="Schmutz J."/>
            <person name="Larimer F."/>
            <person name="Land M.L."/>
            <person name="Hauser L."/>
            <person name="Kyrpides N."/>
            <person name="Mikhailova N."/>
            <person name="Ye Q."/>
            <person name="Zhou J."/>
            <person name="Richardson P."/>
            <person name="Fields M.W."/>
        </authorList>
    </citation>
    <scope>NUCLEOTIDE SEQUENCE [LARGE SCALE GENOMIC DNA]</scope>
    <source>
        <strain>QYMF</strain>
    </source>
</reference>
<feature type="chain" id="PRO_1000069225" description="Bifunctional protein FolD">
    <location>
        <begin position="1"/>
        <end position="284"/>
    </location>
</feature>
<feature type="binding site" evidence="1">
    <location>
        <begin position="165"/>
        <end position="167"/>
    </location>
    <ligand>
        <name>NADP(+)</name>
        <dbReference type="ChEBI" id="CHEBI:58349"/>
    </ligand>
</feature>
<feature type="binding site" evidence="1">
    <location>
        <position position="190"/>
    </location>
    <ligand>
        <name>NADP(+)</name>
        <dbReference type="ChEBI" id="CHEBI:58349"/>
    </ligand>
</feature>
<feature type="binding site" evidence="1">
    <location>
        <position position="231"/>
    </location>
    <ligand>
        <name>NADP(+)</name>
        <dbReference type="ChEBI" id="CHEBI:58349"/>
    </ligand>
</feature>
<organism>
    <name type="scientific">Alkaliphilus metalliredigens (strain QYMF)</name>
    <dbReference type="NCBI Taxonomy" id="293826"/>
    <lineage>
        <taxon>Bacteria</taxon>
        <taxon>Bacillati</taxon>
        <taxon>Bacillota</taxon>
        <taxon>Clostridia</taxon>
        <taxon>Peptostreptococcales</taxon>
        <taxon>Natronincolaceae</taxon>
        <taxon>Alkaliphilus</taxon>
    </lineage>
</organism>
<name>FOLD_ALKMQ</name>
<comment type="function">
    <text evidence="1">Catalyzes the oxidation of 5,10-methylenetetrahydrofolate to 5,10-methenyltetrahydrofolate and then the hydrolysis of 5,10-methenyltetrahydrofolate to 10-formyltetrahydrofolate.</text>
</comment>
<comment type="catalytic activity">
    <reaction evidence="1">
        <text>(6R)-5,10-methylene-5,6,7,8-tetrahydrofolate + NADP(+) = (6R)-5,10-methenyltetrahydrofolate + NADPH</text>
        <dbReference type="Rhea" id="RHEA:22812"/>
        <dbReference type="ChEBI" id="CHEBI:15636"/>
        <dbReference type="ChEBI" id="CHEBI:57455"/>
        <dbReference type="ChEBI" id="CHEBI:57783"/>
        <dbReference type="ChEBI" id="CHEBI:58349"/>
        <dbReference type="EC" id="1.5.1.5"/>
    </reaction>
</comment>
<comment type="catalytic activity">
    <reaction evidence="1">
        <text>(6R)-5,10-methenyltetrahydrofolate + H2O = (6R)-10-formyltetrahydrofolate + H(+)</text>
        <dbReference type="Rhea" id="RHEA:23700"/>
        <dbReference type="ChEBI" id="CHEBI:15377"/>
        <dbReference type="ChEBI" id="CHEBI:15378"/>
        <dbReference type="ChEBI" id="CHEBI:57455"/>
        <dbReference type="ChEBI" id="CHEBI:195366"/>
        <dbReference type="EC" id="3.5.4.9"/>
    </reaction>
</comment>
<comment type="pathway">
    <text evidence="1">One-carbon metabolism; tetrahydrofolate interconversion.</text>
</comment>
<comment type="subunit">
    <text evidence="1">Homodimer.</text>
</comment>
<comment type="similarity">
    <text evidence="1">Belongs to the tetrahydrofolate dehydrogenase/cyclohydrolase family.</text>
</comment>
<evidence type="ECO:0000255" key="1">
    <source>
        <dbReference type="HAMAP-Rule" id="MF_01576"/>
    </source>
</evidence>
<protein>
    <recommendedName>
        <fullName evidence="1">Bifunctional protein FolD</fullName>
    </recommendedName>
    <domain>
        <recommendedName>
            <fullName evidence="1">Methylenetetrahydrofolate dehydrogenase</fullName>
            <ecNumber evidence="1">1.5.1.5</ecNumber>
        </recommendedName>
    </domain>
    <domain>
        <recommendedName>
            <fullName evidence="1">Methenyltetrahydrofolate cyclohydrolase</fullName>
            <ecNumber evidence="1">3.5.4.9</ecNumber>
        </recommendedName>
    </domain>
</protein>